<feature type="signal peptide" evidence="1">
    <location>
        <begin position="1"/>
        <end position="19"/>
    </location>
</feature>
<feature type="chain" id="PRO_0000455008" description="Apolipoprotein(a)" evidence="1">
    <location>
        <begin position="20"/>
        <end position="2040"/>
    </location>
</feature>
<feature type="domain" description="Kringle 1" evidence="2">
    <location>
        <begin position="27"/>
        <end position="105"/>
    </location>
</feature>
<feature type="domain" description="Kringle 2" evidence="2">
    <location>
        <begin position="141"/>
        <end position="219"/>
    </location>
</feature>
<feature type="domain" description="Kringle 3" evidence="2">
    <location>
        <begin position="255"/>
        <end position="333"/>
    </location>
</feature>
<feature type="domain" description="Kringle 4" evidence="2">
    <location>
        <begin position="369"/>
        <end position="447"/>
    </location>
</feature>
<feature type="domain" description="Kringle 5" evidence="2">
    <location>
        <begin position="483"/>
        <end position="561"/>
    </location>
</feature>
<feature type="domain" description="Kringle 6" evidence="2">
    <location>
        <begin position="597"/>
        <end position="675"/>
    </location>
</feature>
<feature type="domain" description="Kringle 7" evidence="2">
    <location>
        <begin position="711"/>
        <end position="789"/>
    </location>
</feature>
<feature type="domain" description="Kringle 8" evidence="2">
    <location>
        <begin position="825"/>
        <end position="903"/>
    </location>
</feature>
<feature type="domain" description="Kringle 9" evidence="2">
    <location>
        <begin position="939"/>
        <end position="1017"/>
    </location>
</feature>
<feature type="domain" description="Kringle 10" evidence="2">
    <location>
        <begin position="1053"/>
        <end position="1131"/>
    </location>
</feature>
<feature type="domain" description="Kringle 11" evidence="2">
    <location>
        <begin position="1167"/>
        <end position="1245"/>
    </location>
</feature>
<feature type="domain" description="Kringle 12" evidence="2">
    <location>
        <begin position="1273"/>
        <end position="1351"/>
    </location>
</feature>
<feature type="domain" description="Kringle 13" evidence="2">
    <location>
        <begin position="1387"/>
        <end position="1465"/>
    </location>
</feature>
<feature type="domain" description="Kringle 14" evidence="2">
    <location>
        <begin position="1501"/>
        <end position="1579"/>
    </location>
</feature>
<feature type="domain" description="Kringle 15" evidence="2">
    <location>
        <begin position="1615"/>
        <end position="1693"/>
    </location>
</feature>
<feature type="domain" description="Kringle 16" evidence="2">
    <location>
        <begin position="1719"/>
        <end position="1799"/>
    </location>
</feature>
<feature type="domain" description="Peptidase S1" evidence="3">
    <location>
        <begin position="1820"/>
        <end position="2038"/>
    </location>
</feature>
<feature type="region of interest" description="Disordered" evidence="5">
    <location>
        <begin position="1147"/>
        <end position="1166"/>
    </location>
</feature>
<feature type="region of interest" description="Disordered" evidence="5">
    <location>
        <begin position="1365"/>
        <end position="1388"/>
    </location>
</feature>
<feature type="region of interest" description="Disordered" evidence="5">
    <location>
        <begin position="1476"/>
        <end position="1497"/>
    </location>
</feature>
<feature type="active site" description="Charge relay system" evidence="3">
    <location>
        <position position="1861"/>
    </location>
</feature>
<feature type="active site" description="Charge relay system" evidence="3">
    <location>
        <position position="1904"/>
    </location>
</feature>
<feature type="active site" description="Charge relay system" evidence="3">
    <location>
        <position position="1990"/>
    </location>
</feature>
<feature type="glycosylation site" description="N-linked (GlcNAc...) asparagine" evidence="4">
    <location>
        <position position="61"/>
    </location>
</feature>
<feature type="glycosylation site" description="N-linked (GlcNAc...) asparagine" evidence="4">
    <location>
        <position position="101"/>
    </location>
</feature>
<feature type="glycosylation site" description="N-linked (GlcNAc...) asparagine" evidence="4">
    <location>
        <position position="215"/>
    </location>
</feature>
<feature type="glycosylation site" description="N-linked (GlcNAc...) asparagine" evidence="4">
    <location>
        <position position="329"/>
    </location>
</feature>
<feature type="glycosylation site" description="N-linked (GlcNAc...) asparagine" evidence="4">
    <location>
        <position position="443"/>
    </location>
</feature>
<feature type="glycosylation site" description="N-linked (GlcNAc...) asparagine" evidence="4">
    <location>
        <position position="557"/>
    </location>
</feature>
<feature type="glycosylation site" description="N-linked (GlcNAc...) asparagine" evidence="4">
    <location>
        <position position="671"/>
    </location>
</feature>
<feature type="glycosylation site" description="N-linked (GlcNAc...) asparagine" evidence="4">
    <location>
        <position position="785"/>
    </location>
</feature>
<feature type="glycosylation site" description="N-linked (GlcNAc...) asparagine" evidence="4">
    <location>
        <position position="899"/>
    </location>
</feature>
<feature type="glycosylation site" description="N-linked (GlcNAc...) asparagine" evidence="4">
    <location>
        <position position="1013"/>
    </location>
</feature>
<feature type="glycosylation site" description="N-linked (GlcNAc...) asparagine" evidence="4">
    <location>
        <position position="1127"/>
    </location>
</feature>
<feature type="glycosylation site" description="N-linked (GlcNAc...) asparagine" evidence="4">
    <location>
        <position position="1241"/>
    </location>
</feature>
<feature type="glycosylation site" description="N-linked (GlcNAc...) asparagine" evidence="4">
    <location>
        <position position="1347"/>
    </location>
</feature>
<feature type="glycosylation site" description="N-linked (GlcNAc...) asparagine" evidence="4">
    <location>
        <position position="1381"/>
    </location>
</feature>
<feature type="glycosylation site" description="N-linked (GlcNAc...) asparagine" evidence="4">
    <location>
        <position position="1461"/>
    </location>
</feature>
<feature type="glycosylation site" description="N-linked (GlcNAc...) asparagine" evidence="4">
    <location>
        <position position="1575"/>
    </location>
</feature>
<feature type="glycosylation site" description="N-linked (GlcNAc...) asparagine" evidence="4">
    <location>
        <position position="1689"/>
    </location>
</feature>
<feature type="disulfide bond" evidence="2">
    <location>
        <begin position="28"/>
        <end position="105"/>
    </location>
</feature>
<feature type="disulfide bond" evidence="2">
    <location>
        <begin position="49"/>
        <end position="88"/>
    </location>
</feature>
<feature type="disulfide bond" evidence="2">
    <location>
        <begin position="77"/>
        <end position="100"/>
    </location>
</feature>
<feature type="disulfide bond" evidence="2">
    <location>
        <begin position="142"/>
        <end position="219"/>
    </location>
</feature>
<feature type="disulfide bond" evidence="2">
    <location>
        <begin position="163"/>
        <end position="202"/>
    </location>
</feature>
<feature type="disulfide bond" evidence="2">
    <location>
        <begin position="191"/>
        <end position="214"/>
    </location>
</feature>
<feature type="disulfide bond" evidence="2">
    <location>
        <begin position="256"/>
        <end position="333"/>
    </location>
</feature>
<feature type="disulfide bond" evidence="2">
    <location>
        <begin position="277"/>
        <end position="316"/>
    </location>
</feature>
<feature type="disulfide bond" evidence="2">
    <location>
        <begin position="305"/>
        <end position="328"/>
    </location>
</feature>
<feature type="disulfide bond" evidence="2">
    <location>
        <begin position="370"/>
        <end position="447"/>
    </location>
</feature>
<feature type="disulfide bond" evidence="2">
    <location>
        <begin position="391"/>
        <end position="430"/>
    </location>
</feature>
<feature type="disulfide bond" evidence="2">
    <location>
        <begin position="419"/>
        <end position="442"/>
    </location>
</feature>
<feature type="disulfide bond" evidence="2">
    <location>
        <begin position="484"/>
        <end position="561"/>
    </location>
</feature>
<feature type="disulfide bond" evidence="2">
    <location>
        <begin position="505"/>
        <end position="544"/>
    </location>
</feature>
<feature type="disulfide bond" evidence="2">
    <location>
        <begin position="533"/>
        <end position="556"/>
    </location>
</feature>
<feature type="disulfide bond" evidence="2">
    <location>
        <begin position="598"/>
        <end position="675"/>
    </location>
</feature>
<feature type="disulfide bond" evidence="2">
    <location>
        <begin position="619"/>
        <end position="658"/>
    </location>
</feature>
<feature type="disulfide bond" evidence="2">
    <location>
        <begin position="647"/>
        <end position="670"/>
    </location>
</feature>
<feature type="disulfide bond" evidence="2">
    <location>
        <begin position="712"/>
        <end position="789"/>
    </location>
</feature>
<feature type="disulfide bond" evidence="2">
    <location>
        <begin position="733"/>
        <end position="772"/>
    </location>
</feature>
<feature type="disulfide bond" evidence="2">
    <location>
        <begin position="761"/>
        <end position="784"/>
    </location>
</feature>
<feature type="disulfide bond" evidence="2">
    <location>
        <begin position="826"/>
        <end position="903"/>
    </location>
</feature>
<feature type="disulfide bond" evidence="2">
    <location>
        <begin position="847"/>
        <end position="886"/>
    </location>
</feature>
<feature type="disulfide bond" evidence="2">
    <location>
        <begin position="875"/>
        <end position="898"/>
    </location>
</feature>
<feature type="disulfide bond" evidence="2">
    <location>
        <begin position="940"/>
        <end position="1017"/>
    </location>
</feature>
<feature type="disulfide bond" evidence="2">
    <location>
        <begin position="961"/>
        <end position="1000"/>
    </location>
</feature>
<feature type="disulfide bond" evidence="2">
    <location>
        <begin position="989"/>
        <end position="1012"/>
    </location>
</feature>
<feature type="disulfide bond" evidence="2">
    <location>
        <begin position="1054"/>
        <end position="1131"/>
    </location>
</feature>
<feature type="disulfide bond" evidence="2">
    <location>
        <begin position="1075"/>
        <end position="1114"/>
    </location>
</feature>
<feature type="disulfide bond" evidence="2">
    <location>
        <begin position="1103"/>
        <end position="1126"/>
    </location>
</feature>
<feature type="disulfide bond" evidence="2">
    <location>
        <begin position="1168"/>
        <end position="1245"/>
    </location>
</feature>
<feature type="disulfide bond" evidence="2">
    <location>
        <begin position="1189"/>
        <end position="1228"/>
    </location>
</feature>
<feature type="disulfide bond" evidence="2">
    <location>
        <begin position="1217"/>
        <end position="1240"/>
    </location>
</feature>
<feature type="disulfide bond" evidence="2">
    <location>
        <begin position="1274"/>
        <end position="1351"/>
    </location>
</feature>
<feature type="disulfide bond" evidence="2">
    <location>
        <begin position="1295"/>
        <end position="1334"/>
    </location>
</feature>
<feature type="disulfide bond" evidence="2">
    <location>
        <begin position="1323"/>
        <end position="1346"/>
    </location>
</feature>
<feature type="disulfide bond" evidence="2">
    <location>
        <begin position="1388"/>
        <end position="1465"/>
    </location>
</feature>
<feature type="disulfide bond" evidence="2">
    <location>
        <begin position="1409"/>
        <end position="1448"/>
    </location>
</feature>
<feature type="disulfide bond" evidence="2">
    <location>
        <begin position="1437"/>
        <end position="1460"/>
    </location>
</feature>
<feature type="disulfide bond" evidence="2">
    <location>
        <begin position="1502"/>
        <end position="1579"/>
    </location>
</feature>
<feature type="disulfide bond" evidence="2">
    <location>
        <begin position="1523"/>
        <end position="1562"/>
    </location>
</feature>
<feature type="disulfide bond" evidence="2">
    <location>
        <begin position="1551"/>
        <end position="1574"/>
    </location>
</feature>
<feature type="disulfide bond" evidence="2">
    <location>
        <begin position="1616"/>
        <end position="1693"/>
    </location>
</feature>
<feature type="disulfide bond" evidence="2">
    <location>
        <begin position="1637"/>
        <end position="1676"/>
    </location>
</feature>
<feature type="disulfide bond" evidence="2">
    <location>
        <begin position="1665"/>
        <end position="1688"/>
    </location>
</feature>
<feature type="disulfide bond" evidence="2">
    <location>
        <begin position="1720"/>
        <end position="1799"/>
    </location>
</feature>
<feature type="disulfide bond" evidence="2">
    <location>
        <begin position="1741"/>
        <end position="1782"/>
    </location>
</feature>
<feature type="disulfide bond" evidence="2">
    <location>
        <begin position="1770"/>
        <end position="1794"/>
    </location>
</feature>
<feature type="disulfide bond" evidence="3">
    <location>
        <begin position="1846"/>
        <end position="1862"/>
    </location>
</feature>
<feature type="disulfide bond" evidence="3">
    <location>
        <begin position="1938"/>
        <end position="1996"/>
    </location>
</feature>
<feature type="disulfide bond" evidence="3">
    <location>
        <begin position="1968"/>
        <end position="1975"/>
    </location>
</feature>
<feature type="disulfide bond" evidence="3">
    <location>
        <begin position="1986"/>
        <end position="2014"/>
    </location>
</feature>
<feature type="sequence variant" id="VAR_047293" description="In dbSNP:rs41259144.">
    <original>R</original>
    <variation>Q</variation>
    <location>
        <position position="990"/>
    </location>
</feature>
<feature type="sequence variant" id="VAR_047294" description="In dbSNP:rs7765803.">
    <original>L</original>
    <variation>V</variation>
    <location>
        <position position="1358"/>
    </location>
</feature>
<feature type="sequence variant" id="VAR_047295" description="In dbSNP:rs7765781.">
    <original>L</original>
    <variation>V</variation>
    <location>
        <position position="1372"/>
    </location>
</feature>
<feature type="sequence variant" id="VAR_047296" description="In dbSNP:rs41272110.">
    <original>T</original>
    <variation>P</variation>
    <location>
        <position position="1399"/>
    </location>
</feature>
<feature type="sequence variant" id="VAR_047297" description="In dbSNP:rs41272112.">
    <original>R</original>
    <variation>Q</variation>
    <location>
        <position position="1421"/>
    </location>
</feature>
<feature type="sequence variant" id="VAR_047298" description="In dbSNP:rs41264308.">
    <original>M</original>
    <variation>T</variation>
    <location>
        <position position="1598"/>
    </location>
</feature>
<feature type="sequence variant" id="VAR_047299" description="In dbSNP:rs1801693.">
    <original>M</original>
    <variation>T</variation>
    <location>
        <position position="1679"/>
    </location>
</feature>
<feature type="sequence variant" id="VAR_006633" description="Loss of lysine-sepharose binding; dbSNP:rs1211014575." evidence="10">
    <original>W</original>
    <variation>R</variation>
    <location>
        <position position="1685"/>
    </location>
</feature>
<feature type="sequence variant" id="VAR_047300" description="In dbSNP:rs41265936.">
    <original>G</original>
    <variation>A</variation>
    <location>
        <position position="1822"/>
    </location>
</feature>
<feature type="sequence variant" id="VAR_047301" description="In dbSNP:rs3798220.">
    <original>I</original>
    <variation>M</variation>
    <location>
        <position position="1891"/>
    </location>
</feature>
<feature type="sequence variant" id="VAR_047302" description="In dbSNP:rs3124784.">
    <original>R</original>
    <variation>C</variation>
    <location>
        <position position="2016"/>
    </location>
</feature>
<feature type="strand" evidence="20">
    <location>
        <begin position="712"/>
        <end position="714"/>
    </location>
</feature>
<feature type="turn" evidence="20">
    <location>
        <begin position="748"/>
        <end position="750"/>
    </location>
</feature>
<feature type="strand" evidence="20">
    <location>
        <begin position="771"/>
        <end position="776"/>
    </location>
</feature>
<feature type="strand" evidence="20">
    <location>
        <begin position="781"/>
        <end position="785"/>
    </location>
</feature>
<feature type="helix" evidence="20">
    <location>
        <begin position="789"/>
        <end position="792"/>
    </location>
</feature>
<feature type="strand" evidence="12">
    <location>
        <begin position="1157"/>
        <end position="1159"/>
    </location>
</feature>
<feature type="turn" evidence="12">
    <location>
        <begin position="1171"/>
        <end position="1175"/>
    </location>
</feature>
<feature type="strand" evidence="12">
    <location>
        <begin position="1196"/>
        <end position="1198"/>
    </location>
</feature>
<feature type="helix" evidence="12">
    <location>
        <begin position="1204"/>
        <end position="1206"/>
    </location>
</feature>
<feature type="turn" evidence="12">
    <location>
        <begin position="1208"/>
        <end position="1210"/>
    </location>
</feature>
<feature type="strand" evidence="12">
    <location>
        <begin position="1227"/>
        <end position="1232"/>
    </location>
</feature>
<feature type="strand" evidence="12">
    <location>
        <begin position="1237"/>
        <end position="1241"/>
    </location>
</feature>
<feature type="strand" evidence="19">
    <location>
        <begin position="1274"/>
        <end position="1276"/>
    </location>
</feature>
<feature type="strand" evidence="19">
    <location>
        <begin position="1302"/>
        <end position="1304"/>
    </location>
</feature>
<feature type="turn" evidence="11">
    <location>
        <begin position="1310"/>
        <end position="1312"/>
    </location>
</feature>
<feature type="turn" evidence="11">
    <location>
        <begin position="1314"/>
        <end position="1317"/>
    </location>
</feature>
<feature type="strand" evidence="11">
    <location>
        <begin position="1326"/>
        <end position="1328"/>
    </location>
</feature>
<feature type="strand" evidence="11">
    <location>
        <begin position="1333"/>
        <end position="1338"/>
    </location>
</feature>
<feature type="strand" evidence="11">
    <location>
        <begin position="1343"/>
        <end position="1347"/>
    </location>
</feature>
<feature type="strand" evidence="14">
    <location>
        <begin position="1381"/>
        <end position="1385"/>
    </location>
</feature>
<feature type="strand" evidence="14">
    <location>
        <begin position="1404"/>
        <end position="1406"/>
    </location>
</feature>
<feature type="strand" evidence="14">
    <location>
        <begin position="1416"/>
        <end position="1418"/>
    </location>
</feature>
<feature type="turn" evidence="21">
    <location>
        <begin position="1424"/>
        <end position="1426"/>
    </location>
</feature>
<feature type="strand" evidence="14">
    <location>
        <begin position="1443"/>
        <end position="1445"/>
    </location>
</feature>
<feature type="strand" evidence="21">
    <location>
        <begin position="1447"/>
        <end position="1452"/>
    </location>
</feature>
<feature type="strand" evidence="21">
    <location>
        <begin position="1457"/>
        <end position="1461"/>
    </location>
</feature>
<feature type="strand" evidence="16">
    <location>
        <begin position="1616"/>
        <end position="1618"/>
    </location>
</feature>
<feature type="strand" evidence="13">
    <location>
        <begin position="1621"/>
        <end position="1623"/>
    </location>
</feature>
<feature type="strand" evidence="15">
    <location>
        <begin position="1644"/>
        <end position="1646"/>
    </location>
</feature>
<feature type="turn" evidence="17">
    <location>
        <begin position="1652"/>
        <end position="1654"/>
    </location>
</feature>
<feature type="turn" evidence="15">
    <location>
        <begin position="1656"/>
        <end position="1659"/>
    </location>
</feature>
<feature type="strand" evidence="17">
    <location>
        <begin position="1675"/>
        <end position="1680"/>
    </location>
</feature>
<feature type="strand" evidence="17">
    <location>
        <begin position="1685"/>
        <end position="1689"/>
    </location>
</feature>
<feature type="strand" evidence="18">
    <location>
        <begin position="1748"/>
        <end position="1750"/>
    </location>
</feature>
<feature type="strand" evidence="18">
    <location>
        <begin position="1753"/>
        <end position="1755"/>
    </location>
</feature>
<feature type="turn" evidence="18">
    <location>
        <begin position="1757"/>
        <end position="1759"/>
    </location>
</feature>
<feature type="strand" evidence="18">
    <location>
        <begin position="1781"/>
        <end position="1785"/>
    </location>
</feature>
<feature type="strand" evidence="18">
    <location>
        <begin position="1791"/>
        <end position="1793"/>
    </location>
</feature>
<accession>P08519</accession>
<accession>Q5VTD7</accession>
<accession>Q9UD88</accession>
<reference key="1">
    <citation type="journal article" date="1987" name="Nature">
        <title>cDNA sequence of human apolipoprotein(a) is homologous to plasminogen.</title>
        <authorList>
            <person name="McLean J.W."/>
            <person name="Tomlison J.E."/>
            <person name="Kuang W.-J."/>
            <person name="Eaton D.L."/>
            <person name="Chen E.Y."/>
            <person name="Fless G.M."/>
            <person name="Scanu A.M."/>
            <person name="Lawn R.M."/>
        </authorList>
    </citation>
    <scope>NUCLEOTIDE SEQUENCE [MRNA]</scope>
    <scope>POLYMORPHISM</scope>
</reference>
<reference key="2">
    <citation type="journal article" date="2003" name="Nature">
        <title>The DNA sequence and analysis of human chromosome 6.</title>
        <authorList>
            <person name="Mungall A.J."/>
            <person name="Palmer S.A."/>
            <person name="Sims S.K."/>
            <person name="Edwards C.A."/>
            <person name="Ashurst J.L."/>
            <person name="Wilming L."/>
            <person name="Jones M.C."/>
            <person name="Horton R."/>
            <person name="Hunt S.E."/>
            <person name="Scott C.E."/>
            <person name="Gilbert J.G.R."/>
            <person name="Clamp M.E."/>
            <person name="Bethel G."/>
            <person name="Milne S."/>
            <person name="Ainscough R."/>
            <person name="Almeida J.P."/>
            <person name="Ambrose K.D."/>
            <person name="Andrews T.D."/>
            <person name="Ashwell R.I.S."/>
            <person name="Babbage A.K."/>
            <person name="Bagguley C.L."/>
            <person name="Bailey J."/>
            <person name="Banerjee R."/>
            <person name="Barker D.J."/>
            <person name="Barlow K.F."/>
            <person name="Bates K."/>
            <person name="Beare D.M."/>
            <person name="Beasley H."/>
            <person name="Beasley O."/>
            <person name="Bird C.P."/>
            <person name="Blakey S.E."/>
            <person name="Bray-Allen S."/>
            <person name="Brook J."/>
            <person name="Brown A.J."/>
            <person name="Brown J.Y."/>
            <person name="Burford D.C."/>
            <person name="Burrill W."/>
            <person name="Burton J."/>
            <person name="Carder C."/>
            <person name="Carter N.P."/>
            <person name="Chapman J.C."/>
            <person name="Clark S.Y."/>
            <person name="Clark G."/>
            <person name="Clee C.M."/>
            <person name="Clegg S."/>
            <person name="Cobley V."/>
            <person name="Collier R.E."/>
            <person name="Collins J.E."/>
            <person name="Colman L.K."/>
            <person name="Corby N.R."/>
            <person name="Coville G.J."/>
            <person name="Culley K.M."/>
            <person name="Dhami P."/>
            <person name="Davies J."/>
            <person name="Dunn M."/>
            <person name="Earthrowl M.E."/>
            <person name="Ellington A.E."/>
            <person name="Evans K.A."/>
            <person name="Faulkner L."/>
            <person name="Francis M.D."/>
            <person name="Frankish A."/>
            <person name="Frankland J."/>
            <person name="French L."/>
            <person name="Garner P."/>
            <person name="Garnett J."/>
            <person name="Ghori M.J."/>
            <person name="Gilby L.M."/>
            <person name="Gillson C.J."/>
            <person name="Glithero R.J."/>
            <person name="Grafham D.V."/>
            <person name="Grant M."/>
            <person name="Gribble S."/>
            <person name="Griffiths C."/>
            <person name="Griffiths M.N.D."/>
            <person name="Hall R."/>
            <person name="Halls K.S."/>
            <person name="Hammond S."/>
            <person name="Harley J.L."/>
            <person name="Hart E.A."/>
            <person name="Heath P.D."/>
            <person name="Heathcott R."/>
            <person name="Holmes S.J."/>
            <person name="Howden P.J."/>
            <person name="Howe K.L."/>
            <person name="Howell G.R."/>
            <person name="Huckle E."/>
            <person name="Humphray S.J."/>
            <person name="Humphries M.D."/>
            <person name="Hunt A.R."/>
            <person name="Johnson C.M."/>
            <person name="Joy A.A."/>
            <person name="Kay M."/>
            <person name="Keenan S.J."/>
            <person name="Kimberley A.M."/>
            <person name="King A."/>
            <person name="Laird G.K."/>
            <person name="Langford C."/>
            <person name="Lawlor S."/>
            <person name="Leongamornlert D.A."/>
            <person name="Leversha M."/>
            <person name="Lloyd C.R."/>
            <person name="Lloyd D.M."/>
            <person name="Loveland J.E."/>
            <person name="Lovell J."/>
            <person name="Martin S."/>
            <person name="Mashreghi-Mohammadi M."/>
            <person name="Maslen G.L."/>
            <person name="Matthews L."/>
            <person name="McCann O.T."/>
            <person name="McLaren S.J."/>
            <person name="McLay K."/>
            <person name="McMurray A."/>
            <person name="Moore M.J.F."/>
            <person name="Mullikin J.C."/>
            <person name="Niblett D."/>
            <person name="Nickerson T."/>
            <person name="Novik K.L."/>
            <person name="Oliver K."/>
            <person name="Overton-Larty E.K."/>
            <person name="Parker A."/>
            <person name="Patel R."/>
            <person name="Pearce A.V."/>
            <person name="Peck A.I."/>
            <person name="Phillimore B.J.C.T."/>
            <person name="Phillips S."/>
            <person name="Plumb R.W."/>
            <person name="Porter K.M."/>
            <person name="Ramsey Y."/>
            <person name="Ranby S.A."/>
            <person name="Rice C.M."/>
            <person name="Ross M.T."/>
            <person name="Searle S.M."/>
            <person name="Sehra H.K."/>
            <person name="Sheridan E."/>
            <person name="Skuce C.D."/>
            <person name="Smith S."/>
            <person name="Smith M."/>
            <person name="Spraggon L."/>
            <person name="Squares S.L."/>
            <person name="Steward C.A."/>
            <person name="Sycamore N."/>
            <person name="Tamlyn-Hall G."/>
            <person name="Tester J."/>
            <person name="Theaker A.J."/>
            <person name="Thomas D.W."/>
            <person name="Thorpe A."/>
            <person name="Tracey A."/>
            <person name="Tromans A."/>
            <person name="Tubby B."/>
            <person name="Wall M."/>
            <person name="Wallis J.M."/>
            <person name="West A.P."/>
            <person name="White S.S."/>
            <person name="Whitehead S.L."/>
            <person name="Whittaker H."/>
            <person name="Wild A."/>
            <person name="Willey D.J."/>
            <person name="Wilmer T.E."/>
            <person name="Wood J.M."/>
            <person name="Wray P.W."/>
            <person name="Wyatt J.C."/>
            <person name="Young L."/>
            <person name="Younger R.M."/>
            <person name="Bentley D.R."/>
            <person name="Coulson A."/>
            <person name="Durbin R.M."/>
            <person name="Hubbard T."/>
            <person name="Sulston J.E."/>
            <person name="Dunham I."/>
            <person name="Rogers J."/>
            <person name="Beck S."/>
        </authorList>
    </citation>
    <scope>NUCLEOTIDE SEQUENCE [LARGE SCALE GENOMIC DNA]</scope>
    <scope>POLYMORPHISM</scope>
</reference>
<reference key="3">
    <citation type="journal article" date="1993" name="Biochim. Biophys. Acta">
        <title>Amplification of human APO(a) kringle 4-37 from blood lymphocyte DNA.</title>
        <authorList>
            <person name="Pfaffinger D."/>
            <person name="Mc Lean J."/>
            <person name="Scanu A.M."/>
        </authorList>
    </citation>
    <scope>NUCLEOTIDE SEQUENCE [MRNA] OF 1676-1700</scope>
    <source>
        <tissue>Lymphocyte</tissue>
    </source>
</reference>
<reference key="4">
    <citation type="journal article" date="1989" name="EMBO J.">
        <title>Lipoprotein(a) binds to fibronectin and has serine proteinase activity capable of cleaving it.</title>
        <authorList>
            <person name="Salonen E.-M."/>
            <person name="Jauhiainen M."/>
            <person name="Zardi L."/>
            <person name="Vaheri A."/>
            <person name="Ehnholm C."/>
        </authorList>
    </citation>
    <scope>FUNCTION AS A SERINE PROTEASE</scope>
</reference>
<reference key="5">
    <citation type="journal article" date="1989" name="Science">
        <title>The mysteries of lipoprotein(a).</title>
        <authorList>
            <person name="Utermann G."/>
        </authorList>
    </citation>
    <scope>REVIEW</scope>
</reference>
<reference key="6">
    <citation type="journal article" date="2001" name="J. Biol. Chem.">
        <title>Structural elucidation of the N- and O-glycans of human apolipoprotein(a): role of o-glycans in conferring protease resistance.</title>
        <authorList>
            <person name="Garner B."/>
            <person name="Merry A.H."/>
            <person name="Royle L."/>
            <person name="Harvey D.J."/>
            <person name="Rudd P.M."/>
            <person name="Thillet J."/>
        </authorList>
    </citation>
    <scope>STRUCTURE OF N-LINKED AND O-LINKED CARBOHYDRATES</scope>
    <scope>IDENTIFICATION BY MASS SPECTROMETRY</scope>
</reference>
<reference key="7">
    <citation type="journal article" date="2014" name="J. Proteomics">
        <title>An enzyme assisted RP-RPLC approach for in-depth analysis of human liver phosphoproteome.</title>
        <authorList>
            <person name="Bian Y."/>
            <person name="Song C."/>
            <person name="Cheng K."/>
            <person name="Dong M."/>
            <person name="Wang F."/>
            <person name="Huang J."/>
            <person name="Sun D."/>
            <person name="Wang L."/>
            <person name="Ye M."/>
            <person name="Zou H."/>
        </authorList>
    </citation>
    <scope>IDENTIFICATION BY MASS SPECTROMETRY [LARGE SCALE ANALYSIS]</scope>
    <source>
        <tissue>Liver</tissue>
    </source>
</reference>
<reference key="8">
    <citation type="journal article" date="1996" name="J. Mol. Biol.">
        <title>Crystal structures of apolipoprotein(a) kringle IV37 free and complexed with 6-aminohexanoic acid and with p-aminomethylbenzoic acid: existence of novel and expected binding modes.</title>
        <authorList>
            <person name="Mikol V."/>
            <person name="Lograsso P.V."/>
            <person name="Boettcher B.R."/>
        </authorList>
    </citation>
    <scope>X-RAY CRYSTALLOGRAPHY (2.0 ANGSTROMS) OF 1613-1700</scope>
</reference>
<reference key="9">
    <citation type="journal article" date="1994" name="Biochim. Biophys. Acta">
        <title>A single point mutation (Trp72--&gt;Arg) in human apo(a) kringle 4-37 associated with a lysine binding defect in Lp(a).</title>
        <authorList>
            <person name="Scanu A.M."/>
            <person name="Pfaffinger D."/>
            <person name="Lee J.C."/>
            <person name="Hinman J."/>
        </authorList>
    </citation>
    <scope>VARIANT ARG-1685</scope>
</reference>
<proteinExistence type="evidence at protein level"/>
<organism>
    <name type="scientific">Homo sapiens</name>
    <name type="common">Human</name>
    <dbReference type="NCBI Taxonomy" id="9606"/>
    <lineage>
        <taxon>Eukaryota</taxon>
        <taxon>Metazoa</taxon>
        <taxon>Chordata</taxon>
        <taxon>Craniata</taxon>
        <taxon>Vertebrata</taxon>
        <taxon>Euteleostomi</taxon>
        <taxon>Mammalia</taxon>
        <taxon>Eutheria</taxon>
        <taxon>Euarchontoglires</taxon>
        <taxon>Primates</taxon>
        <taxon>Haplorrhini</taxon>
        <taxon>Catarrhini</taxon>
        <taxon>Hominidae</taxon>
        <taxon>Homo</taxon>
    </lineage>
</organism>
<dbReference type="EC" id="3.4.21.-"/>
<dbReference type="EMBL" id="X06290">
    <property type="protein sequence ID" value="CAA29618.1"/>
    <property type="molecule type" value="mRNA"/>
</dbReference>
<dbReference type="EMBL" id="AL109933">
    <property type="status" value="NOT_ANNOTATED_CDS"/>
    <property type="molecule type" value="Genomic_DNA"/>
</dbReference>
<dbReference type="EMBL" id="AL596089">
    <property type="status" value="NOT_ANNOTATED_CDS"/>
    <property type="molecule type" value="Genomic_DNA"/>
</dbReference>
<dbReference type="CCDS" id="CCDS43523.1"/>
<dbReference type="PIR" id="S00657">
    <property type="entry name" value="S00657"/>
</dbReference>
<dbReference type="RefSeq" id="NP_005568.2">
    <property type="nucleotide sequence ID" value="NM_005577.4"/>
</dbReference>
<dbReference type="PDB" id="1I71">
    <property type="method" value="X-ray"/>
    <property type="resolution" value="1.45 A"/>
    <property type="chains" value="A=1273-1355"/>
</dbReference>
<dbReference type="PDB" id="1JFN">
    <property type="method" value="NMR"/>
    <property type="chains" value="A=1157-1262"/>
</dbReference>
<dbReference type="PDB" id="1KIV">
    <property type="method" value="X-ray"/>
    <property type="resolution" value="2.10 A"/>
    <property type="chains" value="A=1616-1693"/>
</dbReference>
<dbReference type="PDB" id="2FEB">
    <property type="method" value="NMR"/>
    <property type="chains" value="A=1377-1472"/>
</dbReference>
<dbReference type="PDB" id="3KIV">
    <property type="method" value="X-ray"/>
    <property type="resolution" value="1.80 A"/>
    <property type="chains" value="A=1615-1693"/>
</dbReference>
<dbReference type="PDB" id="4BV5">
    <property type="method" value="X-ray"/>
    <property type="resolution" value="2.10 A"/>
    <property type="chains" value="A/B=1615-1693"/>
</dbReference>
<dbReference type="PDB" id="4BV7">
    <property type="method" value="X-ray"/>
    <property type="resolution" value="1.70 A"/>
    <property type="chains" value="A=1615-1693"/>
</dbReference>
<dbReference type="PDB" id="4BVC">
    <property type="method" value="X-ray"/>
    <property type="resolution" value="1.60 A"/>
    <property type="chains" value="A=1615-1693"/>
</dbReference>
<dbReference type="PDB" id="4BVD">
    <property type="method" value="X-ray"/>
    <property type="resolution" value="1.68 A"/>
    <property type="chains" value="A=1615-1693"/>
</dbReference>
<dbReference type="PDB" id="4BVV">
    <property type="method" value="X-ray"/>
    <property type="resolution" value="1.80 A"/>
    <property type="chains" value="A=1719-1799"/>
</dbReference>
<dbReference type="PDB" id="4BVW">
    <property type="method" value="X-ray"/>
    <property type="resolution" value="2.00 A"/>
    <property type="chains" value="A/B=1273-1351"/>
</dbReference>
<dbReference type="PDB" id="4KIV">
    <property type="method" value="X-ray"/>
    <property type="resolution" value="2.20 A"/>
    <property type="chains" value="A=1615-1693"/>
</dbReference>
<dbReference type="PDB" id="6RX7">
    <property type="method" value="X-ray"/>
    <property type="resolution" value="1.63 A"/>
    <property type="chains" value="A/B/C=701-796"/>
</dbReference>
<dbReference type="PDB" id="8TCE">
    <property type="method" value="X-ray"/>
    <property type="resolution" value="1.07 A"/>
    <property type="chains" value="A/B=1377-1470"/>
</dbReference>
<dbReference type="PDB" id="8V8Z">
    <property type="method" value="X-ray"/>
    <property type="resolution" value="2.01 A"/>
    <property type="chains" value="A/B/C=1377-1470"/>
</dbReference>
<dbReference type="PDB" id="8V9B">
    <property type="method" value="X-ray"/>
    <property type="resolution" value="1.19 A"/>
    <property type="chains" value="A/B=1262-1357"/>
</dbReference>
<dbReference type="PDBsum" id="1I71"/>
<dbReference type="PDBsum" id="1JFN"/>
<dbReference type="PDBsum" id="1KIV"/>
<dbReference type="PDBsum" id="2FEB"/>
<dbReference type="PDBsum" id="3KIV"/>
<dbReference type="PDBsum" id="4BV5"/>
<dbReference type="PDBsum" id="4BV7"/>
<dbReference type="PDBsum" id="4BVC"/>
<dbReference type="PDBsum" id="4BVD"/>
<dbReference type="PDBsum" id="4BVV"/>
<dbReference type="PDBsum" id="4BVW"/>
<dbReference type="PDBsum" id="4KIV"/>
<dbReference type="PDBsum" id="6RX7"/>
<dbReference type="PDBsum" id="8TCE"/>
<dbReference type="PDBsum" id="8V8Z"/>
<dbReference type="PDBsum" id="8V9B"/>
<dbReference type="SMR" id="P08519"/>
<dbReference type="FunCoup" id="P08519">
    <property type="interactions" value="10"/>
</dbReference>
<dbReference type="IntAct" id="P08519">
    <property type="interactions" value="3"/>
</dbReference>
<dbReference type="MINT" id="P08519"/>
<dbReference type="STRING" id="9606.ENSP00000321334"/>
<dbReference type="BindingDB" id="P08519"/>
<dbReference type="DrugBank" id="DB00513">
    <property type="generic name" value="Aminocaproic acid"/>
</dbReference>
<dbReference type="DrugBank" id="DB11886">
    <property type="generic name" value="Infigratinib"/>
</dbReference>
<dbReference type="DrugBank" id="DB00877">
    <property type="generic name" value="Sirolimus"/>
</dbReference>
<dbReference type="DrugBank" id="DB00460">
    <property type="generic name" value="Verteporfin"/>
</dbReference>
<dbReference type="MEROPS" id="S01.999"/>
<dbReference type="GlyConnect" id="56">
    <property type="glycosylation" value="21 N-Linked glycans (4 sites), 4 O-Linked glycans"/>
</dbReference>
<dbReference type="GlyCosmos" id="P08519">
    <property type="glycosylation" value="37 sites, 31 glycans"/>
</dbReference>
<dbReference type="GlyGen" id="P08519">
    <property type="glycosylation" value="23 sites, 12 N-linked glycans (3 sites), 9 O-linked glycans (2 sites)"/>
</dbReference>
<dbReference type="iPTMnet" id="P08519"/>
<dbReference type="PhosphoSitePlus" id="P08519"/>
<dbReference type="BioMuta" id="LPA"/>
<dbReference type="DMDM" id="114062"/>
<dbReference type="CPTAC" id="non-CPTAC-2621"/>
<dbReference type="CPTAC" id="non-CPTAC-2622"/>
<dbReference type="jPOST" id="P08519"/>
<dbReference type="MassIVE" id="P08519"/>
<dbReference type="PaxDb" id="9606-ENSP00000321334"/>
<dbReference type="PeptideAtlas" id="P08519"/>
<dbReference type="ProteomicsDB" id="52116"/>
<dbReference type="Antibodypedia" id="9009">
    <property type="antibodies" value="314 antibodies from 28 providers"/>
</dbReference>
<dbReference type="Ensembl" id="ENST00000316300.10">
    <property type="protein sequence ID" value="ENSP00000321334.6"/>
    <property type="gene ID" value="ENSG00000198670.13"/>
</dbReference>
<dbReference type="GeneID" id="4018"/>
<dbReference type="KEGG" id="hsa:4018"/>
<dbReference type="MANE-Select" id="ENST00000316300.10">
    <property type="protein sequence ID" value="ENSP00000321334.6"/>
    <property type="RefSeq nucleotide sequence ID" value="NM_005577.4"/>
    <property type="RefSeq protein sequence ID" value="NP_005568.2"/>
</dbReference>
<dbReference type="UCSC" id="uc063sqy.1">
    <property type="organism name" value="human"/>
</dbReference>
<dbReference type="AGR" id="HGNC:6667"/>
<dbReference type="CTD" id="4018"/>
<dbReference type="DisGeNET" id="4018"/>
<dbReference type="GeneCards" id="LPA"/>
<dbReference type="HGNC" id="HGNC:6667">
    <property type="gene designation" value="LPA"/>
</dbReference>
<dbReference type="HPA" id="ENSG00000198670">
    <property type="expression patterns" value="Tissue enriched (liver)"/>
</dbReference>
<dbReference type="MalaCards" id="LPA"/>
<dbReference type="MIM" id="152200">
    <property type="type" value="gene"/>
</dbReference>
<dbReference type="MIM" id="618807">
    <property type="type" value="phenotype"/>
</dbReference>
<dbReference type="neXtProt" id="NX_P08519"/>
<dbReference type="OpenTargets" id="ENSG00000198670"/>
<dbReference type="PharmGKB" id="PA30432"/>
<dbReference type="VEuPathDB" id="HostDB:ENSG00000198670"/>
<dbReference type="eggNOG" id="ENOG502QVNP">
    <property type="taxonomic scope" value="Eukaryota"/>
</dbReference>
<dbReference type="GeneTree" id="ENSGT00940000157183"/>
<dbReference type="HOGENOM" id="CLU_233276_0_0_1"/>
<dbReference type="InParanoid" id="P08519"/>
<dbReference type="OMA" id="TERTCQA"/>
<dbReference type="OrthoDB" id="41905at2759"/>
<dbReference type="PAN-GO" id="P08519">
    <property type="GO annotations" value="5 GO annotations based on evolutionary models"/>
</dbReference>
<dbReference type="TreeFam" id="TF329901"/>
<dbReference type="PathwayCommons" id="P08519"/>
<dbReference type="Reactome" id="R-HSA-8964041">
    <property type="pathway name" value="LDL remodeling"/>
</dbReference>
<dbReference type="SignaLink" id="P08519"/>
<dbReference type="ChiTaRS" id="LPA">
    <property type="organism name" value="human"/>
</dbReference>
<dbReference type="EvolutionaryTrace" id="P08519"/>
<dbReference type="Pharos" id="P08519">
    <property type="development level" value="Tbio"/>
</dbReference>
<dbReference type="PRO" id="PR:P08519"/>
<dbReference type="Proteomes" id="UP000005640">
    <property type="component" value="Chromosome 6"/>
</dbReference>
<dbReference type="RNAct" id="P08519">
    <property type="molecule type" value="protein"/>
</dbReference>
<dbReference type="Bgee" id="ENSG00000198670">
    <property type="expression patterns" value="Expressed in liver and 81 other cell types or tissues"/>
</dbReference>
<dbReference type="ExpressionAtlas" id="P08519">
    <property type="expression patterns" value="baseline and differential"/>
</dbReference>
<dbReference type="GO" id="GO:0005576">
    <property type="term" value="C:extracellular region"/>
    <property type="evidence" value="ECO:0000304"/>
    <property type="project" value="Reactome"/>
</dbReference>
<dbReference type="GO" id="GO:0034358">
    <property type="term" value="C:plasma lipoprotein particle"/>
    <property type="evidence" value="ECO:0000314"/>
    <property type="project" value="BHF-UCL"/>
</dbReference>
<dbReference type="GO" id="GO:0034185">
    <property type="term" value="F:apolipoprotein binding"/>
    <property type="evidence" value="ECO:0000353"/>
    <property type="project" value="BHF-UCL"/>
</dbReference>
<dbReference type="GO" id="GO:0004866">
    <property type="term" value="F:endopeptidase inhibitor activity"/>
    <property type="evidence" value="ECO:0000304"/>
    <property type="project" value="ProtInc"/>
</dbReference>
<dbReference type="GO" id="GO:0001968">
    <property type="term" value="F:fibronectin binding"/>
    <property type="evidence" value="ECO:0000353"/>
    <property type="project" value="BHF-UCL"/>
</dbReference>
<dbReference type="GO" id="GO:0008201">
    <property type="term" value="F:heparin binding"/>
    <property type="evidence" value="ECO:0000303"/>
    <property type="project" value="BHF-UCL"/>
</dbReference>
<dbReference type="GO" id="GO:0004252">
    <property type="term" value="F:serine-type endopeptidase activity"/>
    <property type="evidence" value="ECO:0000314"/>
    <property type="project" value="BHF-UCL"/>
</dbReference>
<dbReference type="GO" id="GO:0008015">
    <property type="term" value="P:blood circulation"/>
    <property type="evidence" value="ECO:0000304"/>
    <property type="project" value="ProtInc"/>
</dbReference>
<dbReference type="GO" id="GO:0006629">
    <property type="term" value="P:lipid metabolic process"/>
    <property type="evidence" value="ECO:0000303"/>
    <property type="project" value="ProtInc"/>
</dbReference>
<dbReference type="GO" id="GO:0006869">
    <property type="term" value="P:lipid transport"/>
    <property type="evidence" value="ECO:0007669"/>
    <property type="project" value="UniProtKB-KW"/>
</dbReference>
<dbReference type="GO" id="GO:0006508">
    <property type="term" value="P:proteolysis"/>
    <property type="evidence" value="ECO:0007669"/>
    <property type="project" value="UniProtKB-KW"/>
</dbReference>
<dbReference type="CDD" id="cd00108">
    <property type="entry name" value="KR"/>
    <property type="match status" value="16"/>
</dbReference>
<dbReference type="CDD" id="cd00190">
    <property type="entry name" value="Tryp_SPc"/>
    <property type="match status" value="1"/>
</dbReference>
<dbReference type="FunFam" id="2.40.20.10:FF:000005">
    <property type="entry name" value="Plasminogen"/>
    <property type="match status" value="15"/>
</dbReference>
<dbReference type="FunFam" id="2.40.20.10:FF:000014">
    <property type="entry name" value="Plasminogen"/>
    <property type="match status" value="1"/>
</dbReference>
<dbReference type="FunFam" id="2.40.10.10:FF:000003">
    <property type="entry name" value="Transmembrane serine protease 3"/>
    <property type="match status" value="1"/>
</dbReference>
<dbReference type="Gene3D" id="2.40.20.10">
    <property type="entry name" value="Plasminogen Kringle 4"/>
    <property type="match status" value="16"/>
</dbReference>
<dbReference type="Gene3D" id="2.40.10.10">
    <property type="entry name" value="Trypsin-like serine proteases"/>
    <property type="match status" value="1"/>
</dbReference>
<dbReference type="InterPro" id="IPR000001">
    <property type="entry name" value="Kringle"/>
</dbReference>
<dbReference type="InterPro" id="IPR013806">
    <property type="entry name" value="Kringle-like"/>
</dbReference>
<dbReference type="InterPro" id="IPR018056">
    <property type="entry name" value="Kringle_CS"/>
</dbReference>
<dbReference type="InterPro" id="IPR038178">
    <property type="entry name" value="Kringle_sf"/>
</dbReference>
<dbReference type="InterPro" id="IPR009003">
    <property type="entry name" value="Peptidase_S1_PA"/>
</dbReference>
<dbReference type="InterPro" id="IPR043504">
    <property type="entry name" value="Peptidase_S1_PA_chymotrypsin"/>
</dbReference>
<dbReference type="InterPro" id="IPR001314">
    <property type="entry name" value="Peptidase_S1A"/>
</dbReference>
<dbReference type="InterPro" id="IPR050759">
    <property type="entry name" value="Serine_protease_kringle"/>
</dbReference>
<dbReference type="InterPro" id="IPR001254">
    <property type="entry name" value="Trypsin_dom"/>
</dbReference>
<dbReference type="InterPro" id="IPR018114">
    <property type="entry name" value="TRYPSIN_HIS"/>
</dbReference>
<dbReference type="InterPro" id="IPR033116">
    <property type="entry name" value="TRYPSIN_SER"/>
</dbReference>
<dbReference type="PANTHER" id="PTHR24261:SF2">
    <property type="entry name" value="LIPOPROTEIN(A)"/>
    <property type="match status" value="1"/>
</dbReference>
<dbReference type="PANTHER" id="PTHR24261">
    <property type="entry name" value="PLASMINOGEN-RELATED"/>
    <property type="match status" value="1"/>
</dbReference>
<dbReference type="Pfam" id="PF00051">
    <property type="entry name" value="Kringle"/>
    <property type="match status" value="16"/>
</dbReference>
<dbReference type="Pfam" id="PF00089">
    <property type="entry name" value="Trypsin"/>
    <property type="match status" value="1"/>
</dbReference>
<dbReference type="PRINTS" id="PR00722">
    <property type="entry name" value="CHYMOTRYPSIN"/>
</dbReference>
<dbReference type="PRINTS" id="PR00018">
    <property type="entry name" value="KRINGLE"/>
</dbReference>
<dbReference type="SMART" id="SM00130">
    <property type="entry name" value="KR"/>
    <property type="match status" value="16"/>
</dbReference>
<dbReference type="SMART" id="SM00020">
    <property type="entry name" value="Tryp_SPc"/>
    <property type="match status" value="1"/>
</dbReference>
<dbReference type="SUPFAM" id="SSF57440">
    <property type="entry name" value="Kringle-like"/>
    <property type="match status" value="16"/>
</dbReference>
<dbReference type="SUPFAM" id="SSF50494">
    <property type="entry name" value="Trypsin-like serine proteases"/>
    <property type="match status" value="1"/>
</dbReference>
<dbReference type="PROSITE" id="PS00021">
    <property type="entry name" value="KRINGLE_1"/>
    <property type="match status" value="16"/>
</dbReference>
<dbReference type="PROSITE" id="PS50070">
    <property type="entry name" value="KRINGLE_2"/>
    <property type="match status" value="16"/>
</dbReference>
<dbReference type="PROSITE" id="PS50240">
    <property type="entry name" value="TRYPSIN_DOM"/>
    <property type="match status" value="1"/>
</dbReference>
<dbReference type="PROSITE" id="PS00134">
    <property type="entry name" value="TRYPSIN_HIS"/>
    <property type="match status" value="1"/>
</dbReference>
<dbReference type="PROSITE" id="PS00135">
    <property type="entry name" value="TRYPSIN_SER"/>
    <property type="match status" value="1"/>
</dbReference>
<name>APOA_HUMAN</name>
<evidence type="ECO:0000255" key="1"/>
<evidence type="ECO:0000255" key="2">
    <source>
        <dbReference type="PROSITE-ProRule" id="PRU00121"/>
    </source>
</evidence>
<evidence type="ECO:0000255" key="3">
    <source>
        <dbReference type="PROSITE-ProRule" id="PRU00274"/>
    </source>
</evidence>
<evidence type="ECO:0000255" key="4">
    <source>
        <dbReference type="PROSITE-ProRule" id="PRU00498"/>
    </source>
</evidence>
<evidence type="ECO:0000256" key="5">
    <source>
        <dbReference type="SAM" id="MobiDB-lite"/>
    </source>
</evidence>
<evidence type="ECO:0000269" key="6">
    <source>
    </source>
</evidence>
<evidence type="ECO:0000269" key="7">
    <source>
    </source>
</evidence>
<evidence type="ECO:0000269" key="8">
    <source>
    </source>
</evidence>
<evidence type="ECO:0000269" key="9">
    <source>
    </source>
</evidence>
<evidence type="ECO:0000269" key="10">
    <source>
    </source>
</evidence>
<evidence type="ECO:0007829" key="11">
    <source>
        <dbReference type="PDB" id="1I71"/>
    </source>
</evidence>
<evidence type="ECO:0007829" key="12">
    <source>
        <dbReference type="PDB" id="1JFN"/>
    </source>
</evidence>
<evidence type="ECO:0007829" key="13">
    <source>
        <dbReference type="PDB" id="1KIV"/>
    </source>
</evidence>
<evidence type="ECO:0007829" key="14">
    <source>
        <dbReference type="PDB" id="2FEB"/>
    </source>
</evidence>
<evidence type="ECO:0007829" key="15">
    <source>
        <dbReference type="PDB" id="3KIV"/>
    </source>
</evidence>
<evidence type="ECO:0007829" key="16">
    <source>
        <dbReference type="PDB" id="4BV7"/>
    </source>
</evidence>
<evidence type="ECO:0007829" key="17">
    <source>
        <dbReference type="PDB" id="4BVC"/>
    </source>
</evidence>
<evidence type="ECO:0007829" key="18">
    <source>
        <dbReference type="PDB" id="4BVV"/>
    </source>
</evidence>
<evidence type="ECO:0007829" key="19">
    <source>
        <dbReference type="PDB" id="4BVW"/>
    </source>
</evidence>
<evidence type="ECO:0007829" key="20">
    <source>
        <dbReference type="PDB" id="6RX7"/>
    </source>
</evidence>
<evidence type="ECO:0007829" key="21">
    <source>
        <dbReference type="PDB" id="8TCE"/>
    </source>
</evidence>
<sequence length="2040" mass="226546">MEHKEVVLLLLLFLKSAAPEQSHVVQDCYHGDGQSYRGTYSTTVTGRTCQAWSSMTPHQHNRTTENYPNAGLIMNYCRNPDAVAAPYCYTRDPGVRWEYCNLTQCSDAEGTAVAPPTVTPVPSLEAPSEQAPTEQRPGVQECYHGNGQSYRGTYSTTVTGRTCQAWSSMTPHSHSRTPEYYPNAGLIMNYCRNPDAVAAPYCYTRDPGVRWEYCNLTQCSDAEGTAVAPPTVTPVPSLEAPSEQAPTEQRPGVQECYHGNGQSYRGTYSTTVTGRTCQAWSSMTPHSHSRTPEYYPNAGLIMNYCRNPDAVAAPYCYTRDPGVRWEYCNLTQCSDAEGTAVAPPTVTPVPSLEAPSEQAPTEQRPGVQECYHGNGQSYRGTYSTTVTGRTCQAWSSMTPHSHSRTPEYYPNAGLIMNYCRNPDAVAAPYCYTRDPGVRWEYCNLTQCSDAEGTAVAPPTVTPVPSLEAPSEQAPTEQRPGVQECYHGNGQSYRGTYSTTVTGRTCQAWSSMTPHSHSRTPEYYPNAGLIMNYCRNPDAVAAPYCYTRDPGVRWEYCNLTQCSDAEGTAVAPPTVTPVPSLEAPSEQAPTEQRPGVQECYHGNGQSYRGTYSTTVTGRTCQAWSSMTPHSHSRTPEYYPNAGLIMNYCRNPDAVAAPYCYTRDPGVRWEYCNLTQCSDAEGTAVAPPTVTPVPSLEAPSEQAPTEQRPGVQECYHGNGQSYRGTYSTTVTGRTCQAWSSMTPHSHSRTPEYYPNAGLIMNYCRNPDAVAAPYCYTRDPGVRWEYCNLTQCSDAEGTAVAPPTVTPVPSLEAPSEQAPTEQRPGVQECYHGNGQSYRGTYSTTVTGRTCQAWSSMTPHSHSRTPEYYPNAGLIMNYCRNPDPVAAPYCYTRDPSVRWEYCNLTQCSDAEGTAVAPPTITPIPSLEAPSEQAPTEQRPGVQECYHGNGQSYQGTYFITVTGRTCQAWSSMTPHSHSRTPAYYPNAGLIKNYCRNPDPVAAPWCYTTDPSVRWEYCNLTRCSDAEWTAFVPPNVILAPSLEAFFEQALTEETPGVQDCYYHYGQSYRGTYSTTVTGRTCQAWSSMTPHQHSRTPENYPNAGLTRNYCRNPDAEIRPWCYTMDPSVRWEYCNLTQCLVTESSVLATLTVVPDPSTEASSEEAPTEQSPGVQDCYHGDGQSYRGSFSTTVTGRTCQSWSSMTPHWHQRTTEYYPNGGLTRNYCRNPDAEISPWCYTMDPNVRWEYCNLTQCPVTESSVLATSTAVSEQAPTEQSPTVQDCYHGDGQSYRGSFSTTVTGRTCQSWSSMTPHWHQRTTEYYPNGGLTRNYCRNPDAEIRPWCYTMDPSVRWEYCNLTQCPVMESTLLTTPTVVPVPSTELPSEEAPTENSTGVQDCYRGDGQSYRGTLSTTITGRTCQSWSSMTPHWHRRIPLYYPNAGLTRNYCRNPDAEIRPWCYTMDPSVRWEYCNLTRCPVTESSVLTTPTVAPVPSTEAPSEQAPPEKSPVVQDCYHGDGRSYRGISSTTVTGRTCQSWSSMIPHWHQRTPENYPNAGLTENYCRNPDSGKQPWCYTTDPCVRWEYCNLTQCSETESGVLETPTVVPVPSMEAHSEAAPTEQTPVVRQCYHGNGQSYRGTFSTTVTGRTCQSWSSMTPHRHQRTPENYPNDGLTMNYCRNPDADTGPWCFTMDPSIRWEYCNLTRCSDTEGTVVAPPTVIQVPSLGPPSEQDCMFGNGKGYRGKKATTVTGTPCQEWAAQEPHRHSTFIPGTNKWAGLEKNYCRNPDGDINGPWCYTMNPRKLFDYCDIPLCASSSFDCGKPQVEPKKCPGSIVGGCVAHPHSWPWQVSLRTRFGKHFCGGTLISPEWVLTAAHCLKKSSRPSSYKVILGAHQEVNLESHVQEIEVSRLFLEPTQADIALLKLSRPAVITDKVMPACLPSPDYMVTARTECYITGWGETQGTFGTGLLKEAQLLVIENEVCNHYKYICAEHLARGTDSCQGDSGGPLVCFEKDKYILQGVTSWGLGCARPNKPGVYARVSRFVTWIEGMMRNN</sequence>
<protein>
    <recommendedName>
        <fullName>Apolipoprotein(a)</fullName>
        <shortName>Apo(a)</shortName>
        <shortName>Lp(a)</shortName>
        <ecNumber>3.4.21.-</ecNumber>
    </recommendedName>
</protein>
<gene>
    <name type="primary">LPA</name>
</gene>
<comment type="function">
    <text evidence="8">Apo(a) is the main constituent of lipoprotein(a) (Lp(a)). It has serine proteinase activity and is able of autoproteolysis. Inhibits tissue-type plasminogen activator 1. Lp(a) may be a ligand for megalin/Gp 330.</text>
</comment>
<comment type="subunit">
    <text>Disulfide-linked to apo-B100. Binds to fibronectin and decorin.</text>
</comment>
<comment type="interaction">
    <interactant intactId="EBI-9232288">
        <id>P08519</id>
    </interactant>
    <interactant intactId="EBI-2114682">
        <id>P02749</id>
        <label>APOH</label>
    </interactant>
    <organismsDiffer>false</organismsDiffer>
    <experiments>4</experiments>
</comment>
<comment type="interaction">
    <interactant intactId="EBI-9232288">
        <id>P08519</id>
    </interactant>
    <interactant intactId="EBI-1220319">
        <id>P02751</id>
        <label>FN1</label>
    </interactant>
    <organismsDiffer>false</organismsDiffer>
    <experiments>2</experiments>
</comment>
<comment type="PTM">
    <text evidence="6">N- and O-glycosylated. The N-glycans are complex biantennary structures present in either a mono- or disialylated state. The O-glycans are mostly (80%) represented by the monosialylated core type I structure, NeuNAcalpha2-3Galbeta1-3GalNAc, with smaller amounts of disialylated and non-sialylated O-glycans also detected.</text>
</comment>
<comment type="polymorphism">
    <text evidence="7 9">LPA genetic variants, including variations in the number of Kringle domains, define the lipoprotein(a) quantitative trait locus (LPAQTL) and influence lipoprotein(a) levels in plasma [MIM:618807]. Depending on the individual, the encoded protein contains 2-43 copies of kringle IV-2 repeats. Often the assignement of amino acids in lipoprotein(a) is based on a long allele that contains 37 copies of the kringle-type repeats (PubMed:3670400). The reference allele represented here contains 15 copies of the kringle-type repeats.</text>
</comment>
<comment type="miscellaneous">
    <text>Apo(a) is known to be proteolytically cleaved, leading to the formation of the so-called mini-Lp(a). Apo(a) fragments accumulate in atherosclerotic lesions, where they may promote thrombogenesis. O-glycosylation may limit the extent of proteolytic fragmentation. Homology with plasminogen kringles IV and V is thought to underlie the atherogenicity of the protein, because the fragments are competing with plasminogen for fibrin(ogen) binding.</text>
</comment>
<comment type="similarity">
    <text evidence="3">Belongs to the peptidase S1 family. Plasminogen subfamily.</text>
</comment>
<keyword id="KW-0002">3D-structure</keyword>
<keyword id="KW-0065">Atherosclerosis</keyword>
<keyword id="KW-0068">Autocatalytic cleavage</keyword>
<keyword id="KW-1015">Disulfide bond</keyword>
<keyword id="KW-0325">Glycoprotein</keyword>
<keyword id="KW-0378">Hydrolase</keyword>
<keyword id="KW-0420">Kringle</keyword>
<keyword id="KW-0445">Lipid transport</keyword>
<keyword id="KW-0645">Protease</keyword>
<keyword id="KW-1267">Proteomics identification</keyword>
<keyword id="KW-1185">Reference proteome</keyword>
<keyword id="KW-0677">Repeat</keyword>
<keyword id="KW-0720">Serine protease</keyword>
<keyword id="KW-0732">Signal</keyword>
<keyword id="KW-0813">Transport</keyword>